<name>MURG_CARHZ</name>
<gene>
    <name evidence="1" type="primary">murG</name>
    <name type="ordered locus">CHY_2069</name>
</gene>
<sequence length="371" mass="40772">MKLVFAGGGTGGHLYPALAIAQSWKESHPNDEILFVGTPRGIENTVVPKYGFPLYLLPVEGIPRKVSWETLKKLFLVPKSLINAFIFLKKEKPDIVVGTGGYASFPVVFAATVLKIPTVIHEQNAYPGIANKILAARVDAVCLTFGEAKKRMKAKNLYETGLPVRREFFTNAANRNELRKKMGVGKDELLLVAFGGSQGALTINKVVGYLLPEIMLRPNLRLVWATGPRNYENLKQKYKNLPERVQMVPYIDNMPEVLPAADLAITRAGAATLAEIAASKVPAVLIPYPYAAENHQEHNARAFVSHGAAVLLRDAECSEDRVKATILPLLDSPEKLVKMAENAGKVLRRDSLKEITGIMEALLKPKSNKKT</sequence>
<accession>Q3AAE6</accession>
<comment type="function">
    <text evidence="1">Cell wall formation. Catalyzes the transfer of a GlcNAc subunit on undecaprenyl-pyrophosphoryl-MurNAc-pentapeptide (lipid intermediate I) to form undecaprenyl-pyrophosphoryl-MurNAc-(pentapeptide)GlcNAc (lipid intermediate II).</text>
</comment>
<comment type="catalytic activity">
    <reaction evidence="1">
        <text>di-trans,octa-cis-undecaprenyl diphospho-N-acetyl-alpha-D-muramoyl-L-alanyl-D-glutamyl-meso-2,6-diaminopimeloyl-D-alanyl-D-alanine + UDP-N-acetyl-alpha-D-glucosamine = di-trans,octa-cis-undecaprenyl diphospho-[N-acetyl-alpha-D-glucosaminyl-(1-&gt;4)]-N-acetyl-alpha-D-muramoyl-L-alanyl-D-glutamyl-meso-2,6-diaminopimeloyl-D-alanyl-D-alanine + UDP + H(+)</text>
        <dbReference type="Rhea" id="RHEA:31227"/>
        <dbReference type="ChEBI" id="CHEBI:15378"/>
        <dbReference type="ChEBI" id="CHEBI:57705"/>
        <dbReference type="ChEBI" id="CHEBI:58223"/>
        <dbReference type="ChEBI" id="CHEBI:61387"/>
        <dbReference type="ChEBI" id="CHEBI:61388"/>
        <dbReference type="EC" id="2.4.1.227"/>
    </reaction>
</comment>
<comment type="pathway">
    <text evidence="1">Cell wall biogenesis; peptidoglycan biosynthesis.</text>
</comment>
<comment type="subcellular location">
    <subcellularLocation>
        <location evidence="1">Cell membrane</location>
        <topology evidence="1">Peripheral membrane protein</topology>
        <orientation evidence="1">Cytoplasmic side</orientation>
    </subcellularLocation>
</comment>
<comment type="similarity">
    <text evidence="1">Belongs to the glycosyltransferase 28 family. MurG subfamily.</text>
</comment>
<organism>
    <name type="scientific">Carboxydothermus hydrogenoformans (strain ATCC BAA-161 / DSM 6008 / Z-2901)</name>
    <dbReference type="NCBI Taxonomy" id="246194"/>
    <lineage>
        <taxon>Bacteria</taxon>
        <taxon>Bacillati</taxon>
        <taxon>Bacillota</taxon>
        <taxon>Clostridia</taxon>
        <taxon>Thermoanaerobacterales</taxon>
        <taxon>Thermoanaerobacteraceae</taxon>
        <taxon>Carboxydothermus</taxon>
    </lineage>
</organism>
<evidence type="ECO:0000255" key="1">
    <source>
        <dbReference type="HAMAP-Rule" id="MF_00033"/>
    </source>
</evidence>
<dbReference type="EC" id="2.4.1.227" evidence="1"/>
<dbReference type="EMBL" id="CP000141">
    <property type="protein sequence ID" value="ABB15099.1"/>
    <property type="molecule type" value="Genomic_DNA"/>
</dbReference>
<dbReference type="RefSeq" id="WP_011344961.1">
    <property type="nucleotide sequence ID" value="NC_007503.1"/>
</dbReference>
<dbReference type="SMR" id="Q3AAE6"/>
<dbReference type="FunCoup" id="Q3AAE6">
    <property type="interactions" value="315"/>
</dbReference>
<dbReference type="STRING" id="246194.CHY_2069"/>
<dbReference type="CAZy" id="GT28">
    <property type="family name" value="Glycosyltransferase Family 28"/>
</dbReference>
<dbReference type="KEGG" id="chy:CHY_2069"/>
<dbReference type="eggNOG" id="COG0707">
    <property type="taxonomic scope" value="Bacteria"/>
</dbReference>
<dbReference type="HOGENOM" id="CLU_037404_0_1_9"/>
<dbReference type="InParanoid" id="Q3AAE6"/>
<dbReference type="OrthoDB" id="9808936at2"/>
<dbReference type="UniPathway" id="UPA00219"/>
<dbReference type="Proteomes" id="UP000002706">
    <property type="component" value="Chromosome"/>
</dbReference>
<dbReference type="GO" id="GO:0005886">
    <property type="term" value="C:plasma membrane"/>
    <property type="evidence" value="ECO:0007669"/>
    <property type="project" value="UniProtKB-SubCell"/>
</dbReference>
<dbReference type="GO" id="GO:0051991">
    <property type="term" value="F:UDP-N-acetyl-D-glucosamine:N-acetylmuramoyl-L-alanyl-D-glutamyl-meso-2,6-diaminopimelyl-D-alanyl-D-alanine-diphosphoundecaprenol 4-beta-N-acetylglucosaminlytransferase activity"/>
    <property type="evidence" value="ECO:0007669"/>
    <property type="project" value="RHEA"/>
</dbReference>
<dbReference type="GO" id="GO:0050511">
    <property type="term" value="F:undecaprenyldiphospho-muramoylpentapeptide beta-N-acetylglucosaminyltransferase activity"/>
    <property type="evidence" value="ECO:0007669"/>
    <property type="project" value="UniProtKB-UniRule"/>
</dbReference>
<dbReference type="GO" id="GO:0005975">
    <property type="term" value="P:carbohydrate metabolic process"/>
    <property type="evidence" value="ECO:0007669"/>
    <property type="project" value="InterPro"/>
</dbReference>
<dbReference type="GO" id="GO:0051301">
    <property type="term" value="P:cell division"/>
    <property type="evidence" value="ECO:0007669"/>
    <property type="project" value="UniProtKB-KW"/>
</dbReference>
<dbReference type="GO" id="GO:0071555">
    <property type="term" value="P:cell wall organization"/>
    <property type="evidence" value="ECO:0007669"/>
    <property type="project" value="UniProtKB-KW"/>
</dbReference>
<dbReference type="GO" id="GO:0030259">
    <property type="term" value="P:lipid glycosylation"/>
    <property type="evidence" value="ECO:0007669"/>
    <property type="project" value="UniProtKB-UniRule"/>
</dbReference>
<dbReference type="GO" id="GO:0009252">
    <property type="term" value="P:peptidoglycan biosynthetic process"/>
    <property type="evidence" value="ECO:0007669"/>
    <property type="project" value="UniProtKB-UniRule"/>
</dbReference>
<dbReference type="GO" id="GO:0008360">
    <property type="term" value="P:regulation of cell shape"/>
    <property type="evidence" value="ECO:0007669"/>
    <property type="project" value="UniProtKB-KW"/>
</dbReference>
<dbReference type="CDD" id="cd03785">
    <property type="entry name" value="GT28_MurG"/>
    <property type="match status" value="1"/>
</dbReference>
<dbReference type="Gene3D" id="3.40.50.2000">
    <property type="entry name" value="Glycogen Phosphorylase B"/>
    <property type="match status" value="2"/>
</dbReference>
<dbReference type="HAMAP" id="MF_00033">
    <property type="entry name" value="MurG"/>
    <property type="match status" value="1"/>
</dbReference>
<dbReference type="InterPro" id="IPR006009">
    <property type="entry name" value="GlcNAc_MurG"/>
</dbReference>
<dbReference type="InterPro" id="IPR007235">
    <property type="entry name" value="Glyco_trans_28_C"/>
</dbReference>
<dbReference type="InterPro" id="IPR004276">
    <property type="entry name" value="GlycoTrans_28_N"/>
</dbReference>
<dbReference type="NCBIfam" id="TIGR01133">
    <property type="entry name" value="murG"/>
    <property type="match status" value="1"/>
</dbReference>
<dbReference type="PANTHER" id="PTHR21015:SF22">
    <property type="entry name" value="GLYCOSYLTRANSFERASE"/>
    <property type="match status" value="1"/>
</dbReference>
<dbReference type="PANTHER" id="PTHR21015">
    <property type="entry name" value="UDP-N-ACETYLGLUCOSAMINE--N-ACETYLMURAMYL-(PENTAPEPTIDE) PYROPHOSPHORYL-UNDECAPRENOL N-ACETYLGLUCOSAMINE TRANSFERASE 1"/>
    <property type="match status" value="1"/>
</dbReference>
<dbReference type="Pfam" id="PF04101">
    <property type="entry name" value="Glyco_tran_28_C"/>
    <property type="match status" value="1"/>
</dbReference>
<dbReference type="Pfam" id="PF03033">
    <property type="entry name" value="Glyco_transf_28"/>
    <property type="match status" value="1"/>
</dbReference>
<dbReference type="SUPFAM" id="SSF53756">
    <property type="entry name" value="UDP-Glycosyltransferase/glycogen phosphorylase"/>
    <property type="match status" value="1"/>
</dbReference>
<feature type="chain" id="PRO_0000225041" description="UDP-N-acetylglucosamine--N-acetylmuramyl-(pentapeptide) pyrophosphoryl-undecaprenol N-acetylglucosamine transferase">
    <location>
        <begin position="1"/>
        <end position="371"/>
    </location>
</feature>
<feature type="binding site" evidence="1">
    <location>
        <begin position="10"/>
        <end position="12"/>
    </location>
    <ligand>
        <name>UDP-N-acetyl-alpha-D-glucosamine</name>
        <dbReference type="ChEBI" id="CHEBI:57705"/>
    </ligand>
</feature>
<feature type="binding site" evidence="1">
    <location>
        <position position="124"/>
    </location>
    <ligand>
        <name>UDP-N-acetyl-alpha-D-glucosamine</name>
        <dbReference type="ChEBI" id="CHEBI:57705"/>
    </ligand>
</feature>
<feature type="binding site" evidence="1">
    <location>
        <position position="165"/>
    </location>
    <ligand>
        <name>UDP-N-acetyl-alpha-D-glucosamine</name>
        <dbReference type="ChEBI" id="CHEBI:57705"/>
    </ligand>
</feature>
<feature type="binding site" evidence="1">
    <location>
        <position position="197"/>
    </location>
    <ligand>
        <name>UDP-N-acetyl-alpha-D-glucosamine</name>
        <dbReference type="ChEBI" id="CHEBI:57705"/>
    </ligand>
</feature>
<feature type="binding site" evidence="1">
    <location>
        <position position="251"/>
    </location>
    <ligand>
        <name>UDP-N-acetyl-alpha-D-glucosamine</name>
        <dbReference type="ChEBI" id="CHEBI:57705"/>
    </ligand>
</feature>
<feature type="binding site" evidence="1">
    <location>
        <position position="296"/>
    </location>
    <ligand>
        <name>UDP-N-acetyl-alpha-D-glucosamine</name>
        <dbReference type="ChEBI" id="CHEBI:57705"/>
    </ligand>
</feature>
<proteinExistence type="inferred from homology"/>
<reference key="1">
    <citation type="journal article" date="2005" name="PLoS Genet.">
        <title>Life in hot carbon monoxide: the complete genome sequence of Carboxydothermus hydrogenoformans Z-2901.</title>
        <authorList>
            <person name="Wu M."/>
            <person name="Ren Q."/>
            <person name="Durkin A.S."/>
            <person name="Daugherty S.C."/>
            <person name="Brinkac L.M."/>
            <person name="Dodson R.J."/>
            <person name="Madupu R."/>
            <person name="Sullivan S.A."/>
            <person name="Kolonay J.F."/>
            <person name="Nelson W.C."/>
            <person name="Tallon L.J."/>
            <person name="Jones K.M."/>
            <person name="Ulrich L.E."/>
            <person name="Gonzalez J.M."/>
            <person name="Zhulin I.B."/>
            <person name="Robb F.T."/>
            <person name="Eisen J.A."/>
        </authorList>
    </citation>
    <scope>NUCLEOTIDE SEQUENCE [LARGE SCALE GENOMIC DNA]</scope>
    <source>
        <strain>ATCC BAA-161 / DSM 6008 / Z-2901</strain>
    </source>
</reference>
<protein>
    <recommendedName>
        <fullName evidence="1">UDP-N-acetylglucosamine--N-acetylmuramyl-(pentapeptide) pyrophosphoryl-undecaprenol N-acetylglucosamine transferase</fullName>
        <ecNumber evidence="1">2.4.1.227</ecNumber>
    </recommendedName>
    <alternativeName>
        <fullName evidence="1">Undecaprenyl-PP-MurNAc-pentapeptide-UDPGlcNAc GlcNAc transferase</fullName>
    </alternativeName>
</protein>
<keyword id="KW-0131">Cell cycle</keyword>
<keyword id="KW-0132">Cell division</keyword>
<keyword id="KW-1003">Cell membrane</keyword>
<keyword id="KW-0133">Cell shape</keyword>
<keyword id="KW-0961">Cell wall biogenesis/degradation</keyword>
<keyword id="KW-0328">Glycosyltransferase</keyword>
<keyword id="KW-0472">Membrane</keyword>
<keyword id="KW-0573">Peptidoglycan synthesis</keyword>
<keyword id="KW-1185">Reference proteome</keyword>
<keyword id="KW-0808">Transferase</keyword>